<name>NUDC_SALPB</name>
<comment type="function">
    <text evidence="1">mRNA decapping enzyme that specifically removes the nicotinamide adenine dinucleotide (NAD) cap from a subset of mRNAs by hydrolyzing the diphosphate linkage to produce nicotinamide mononucleotide (NMN) and 5' monophosphate mRNA. The NAD-cap is present at the 5'-end of some mRNAs and stabilizes RNA against 5'-processing. Has preference for mRNAs with a 5'-end purine. Catalyzes the hydrolysis of a broad range of dinucleotide pyrophosphates.</text>
</comment>
<comment type="catalytic activity">
    <reaction evidence="1">
        <text>a 5'-end NAD(+)-phospho-ribonucleoside in mRNA + H2O = a 5'-end phospho-adenosine-phospho-ribonucleoside in mRNA + beta-nicotinamide D-ribonucleotide + 2 H(+)</text>
        <dbReference type="Rhea" id="RHEA:60876"/>
        <dbReference type="Rhea" id="RHEA-COMP:15698"/>
        <dbReference type="Rhea" id="RHEA-COMP:15719"/>
        <dbReference type="ChEBI" id="CHEBI:14649"/>
        <dbReference type="ChEBI" id="CHEBI:15377"/>
        <dbReference type="ChEBI" id="CHEBI:15378"/>
        <dbReference type="ChEBI" id="CHEBI:144029"/>
        <dbReference type="ChEBI" id="CHEBI:144051"/>
    </reaction>
    <physiologicalReaction direction="left-to-right" evidence="1">
        <dbReference type="Rhea" id="RHEA:60877"/>
    </physiologicalReaction>
</comment>
<comment type="catalytic activity">
    <reaction evidence="1">
        <text>NAD(+) + H2O = beta-nicotinamide D-ribonucleotide + AMP + 2 H(+)</text>
        <dbReference type="Rhea" id="RHEA:11800"/>
        <dbReference type="ChEBI" id="CHEBI:14649"/>
        <dbReference type="ChEBI" id="CHEBI:15377"/>
        <dbReference type="ChEBI" id="CHEBI:15378"/>
        <dbReference type="ChEBI" id="CHEBI:57540"/>
        <dbReference type="ChEBI" id="CHEBI:456215"/>
        <dbReference type="EC" id="3.6.1.22"/>
    </reaction>
</comment>
<comment type="catalytic activity">
    <reaction evidence="1">
        <text>NADH + H2O = reduced beta-nicotinamide D-ribonucleotide + AMP + 2 H(+)</text>
        <dbReference type="Rhea" id="RHEA:48868"/>
        <dbReference type="ChEBI" id="CHEBI:15377"/>
        <dbReference type="ChEBI" id="CHEBI:15378"/>
        <dbReference type="ChEBI" id="CHEBI:57945"/>
        <dbReference type="ChEBI" id="CHEBI:90832"/>
        <dbReference type="ChEBI" id="CHEBI:456215"/>
        <dbReference type="EC" id="3.6.1.22"/>
    </reaction>
</comment>
<comment type="cofactor">
    <cofactor evidence="1">
        <name>Mg(2+)</name>
        <dbReference type="ChEBI" id="CHEBI:18420"/>
    </cofactor>
    <cofactor evidence="1">
        <name>Mn(2+)</name>
        <dbReference type="ChEBI" id="CHEBI:29035"/>
    </cofactor>
    <text evidence="1">Divalent metal cations. Mg(2+) or Mn(2+).</text>
</comment>
<comment type="cofactor">
    <cofactor evidence="1">
        <name>Zn(2+)</name>
        <dbReference type="ChEBI" id="CHEBI:29105"/>
    </cofactor>
    <text evidence="1">Binds 1 zinc ion per subunit.</text>
</comment>
<comment type="subunit">
    <text evidence="1">Homodimer.</text>
</comment>
<comment type="similarity">
    <text evidence="1">Belongs to the Nudix hydrolase family. NudC subfamily.</text>
</comment>
<proteinExistence type="inferred from homology"/>
<protein>
    <recommendedName>
        <fullName evidence="1">NAD-capped RNA hydrolase NudC</fullName>
        <shortName evidence="1">DeNADding enzyme NudC</shortName>
        <ecNumber evidence="1">3.6.1.-</ecNumber>
    </recommendedName>
    <alternativeName>
        <fullName evidence="1">NADH pyrophosphatase</fullName>
        <ecNumber evidence="1">3.6.1.22</ecNumber>
    </alternativeName>
</protein>
<feature type="chain" id="PRO_1000078949" description="NAD-capped RNA hydrolase NudC">
    <location>
        <begin position="1"/>
        <end position="257"/>
    </location>
</feature>
<feature type="domain" description="Nudix hydrolase" evidence="1">
    <location>
        <begin position="125"/>
        <end position="248"/>
    </location>
</feature>
<feature type="short sequence motif" description="Nudix box" evidence="1">
    <location>
        <begin position="159"/>
        <end position="180"/>
    </location>
</feature>
<feature type="binding site" evidence="1">
    <location>
        <position position="69"/>
    </location>
    <ligand>
        <name>substrate</name>
    </ligand>
</feature>
<feature type="binding site" evidence="1">
    <location>
        <position position="98"/>
    </location>
    <ligand>
        <name>Zn(2+)</name>
        <dbReference type="ChEBI" id="CHEBI:29105"/>
    </ligand>
</feature>
<feature type="binding site" evidence="1">
    <location>
        <position position="101"/>
    </location>
    <ligand>
        <name>Zn(2+)</name>
        <dbReference type="ChEBI" id="CHEBI:29105"/>
    </ligand>
</feature>
<feature type="binding site" evidence="1">
    <location>
        <position position="111"/>
    </location>
    <ligand>
        <name>substrate</name>
    </ligand>
</feature>
<feature type="binding site" evidence="1">
    <location>
        <position position="116"/>
    </location>
    <ligand>
        <name>Zn(2+)</name>
        <dbReference type="ChEBI" id="CHEBI:29105"/>
    </ligand>
</feature>
<feature type="binding site" evidence="1">
    <location>
        <position position="119"/>
    </location>
    <ligand>
        <name>Zn(2+)</name>
        <dbReference type="ChEBI" id="CHEBI:29105"/>
    </ligand>
</feature>
<feature type="binding site" evidence="1">
    <location>
        <position position="124"/>
    </location>
    <ligand>
        <name>substrate</name>
    </ligand>
</feature>
<feature type="binding site" evidence="1">
    <location>
        <position position="158"/>
    </location>
    <ligand>
        <name>a divalent metal cation</name>
        <dbReference type="ChEBI" id="CHEBI:60240"/>
        <label>1</label>
    </ligand>
</feature>
<feature type="binding site" evidence="1">
    <location>
        <position position="174"/>
    </location>
    <ligand>
        <name>a divalent metal cation</name>
        <dbReference type="ChEBI" id="CHEBI:60240"/>
        <label>2</label>
    </ligand>
</feature>
<feature type="binding site" evidence="1">
    <location>
        <position position="174"/>
    </location>
    <ligand>
        <name>a divalent metal cation</name>
        <dbReference type="ChEBI" id="CHEBI:60240"/>
        <label>3</label>
    </ligand>
</feature>
<feature type="binding site" evidence="1">
    <location>
        <position position="178"/>
    </location>
    <ligand>
        <name>a divalent metal cation</name>
        <dbReference type="ChEBI" id="CHEBI:60240"/>
        <label>1</label>
    </ligand>
</feature>
<feature type="binding site" evidence="1">
    <location>
        <position position="178"/>
    </location>
    <ligand>
        <name>a divalent metal cation</name>
        <dbReference type="ChEBI" id="CHEBI:60240"/>
        <label>3</label>
    </ligand>
</feature>
<feature type="binding site" evidence="1">
    <location>
        <begin position="192"/>
        <end position="199"/>
    </location>
    <ligand>
        <name>substrate</name>
    </ligand>
</feature>
<feature type="binding site" evidence="1">
    <location>
        <position position="219"/>
    </location>
    <ligand>
        <name>a divalent metal cation</name>
        <dbReference type="ChEBI" id="CHEBI:60240"/>
        <label>1</label>
    </ligand>
</feature>
<feature type="binding site" evidence="1">
    <location>
        <position position="219"/>
    </location>
    <ligand>
        <name>a divalent metal cation</name>
        <dbReference type="ChEBI" id="CHEBI:60240"/>
        <label>3</label>
    </ligand>
</feature>
<feature type="binding site" evidence="1">
    <location>
        <position position="241"/>
    </location>
    <ligand>
        <name>substrate</name>
    </ligand>
</feature>
<organism>
    <name type="scientific">Salmonella paratyphi B (strain ATCC BAA-1250 / SPB7)</name>
    <dbReference type="NCBI Taxonomy" id="1016998"/>
    <lineage>
        <taxon>Bacteria</taxon>
        <taxon>Pseudomonadati</taxon>
        <taxon>Pseudomonadota</taxon>
        <taxon>Gammaproteobacteria</taxon>
        <taxon>Enterobacterales</taxon>
        <taxon>Enterobacteriaceae</taxon>
        <taxon>Salmonella</taxon>
    </lineage>
</organism>
<accession>A9N0K8</accession>
<dbReference type="EC" id="3.6.1.-" evidence="1"/>
<dbReference type="EC" id="3.6.1.22" evidence="1"/>
<dbReference type="EMBL" id="CP000886">
    <property type="protein sequence ID" value="ABX70437.1"/>
    <property type="molecule type" value="Genomic_DNA"/>
</dbReference>
<dbReference type="RefSeq" id="WP_000373958.1">
    <property type="nucleotide sequence ID" value="NC_010102.1"/>
</dbReference>
<dbReference type="SMR" id="A9N0K8"/>
<dbReference type="KEGG" id="spq:SPAB_05156"/>
<dbReference type="PATRIC" id="fig|1016998.12.peg.4830"/>
<dbReference type="HOGENOM" id="CLU_037162_0_1_6"/>
<dbReference type="BioCyc" id="SENT1016998:SPAB_RS20985-MONOMER"/>
<dbReference type="Proteomes" id="UP000008556">
    <property type="component" value="Chromosome"/>
</dbReference>
<dbReference type="GO" id="GO:0005829">
    <property type="term" value="C:cytosol"/>
    <property type="evidence" value="ECO:0007669"/>
    <property type="project" value="TreeGrafter"/>
</dbReference>
<dbReference type="GO" id="GO:0000287">
    <property type="term" value="F:magnesium ion binding"/>
    <property type="evidence" value="ECO:0007669"/>
    <property type="project" value="UniProtKB-UniRule"/>
</dbReference>
<dbReference type="GO" id="GO:0030145">
    <property type="term" value="F:manganese ion binding"/>
    <property type="evidence" value="ECO:0007669"/>
    <property type="project" value="UniProtKB-UniRule"/>
</dbReference>
<dbReference type="GO" id="GO:0000210">
    <property type="term" value="F:NAD+ diphosphatase activity"/>
    <property type="evidence" value="ECO:0007669"/>
    <property type="project" value="UniProtKB-UniRule"/>
</dbReference>
<dbReference type="GO" id="GO:0035529">
    <property type="term" value="F:NADH pyrophosphatase activity"/>
    <property type="evidence" value="ECO:0007669"/>
    <property type="project" value="TreeGrafter"/>
</dbReference>
<dbReference type="GO" id="GO:0110153">
    <property type="term" value="F:RNA NAD-cap (NMN-forming) hydrolase activity"/>
    <property type="evidence" value="ECO:0007669"/>
    <property type="project" value="RHEA"/>
</dbReference>
<dbReference type="GO" id="GO:0008270">
    <property type="term" value="F:zinc ion binding"/>
    <property type="evidence" value="ECO:0007669"/>
    <property type="project" value="UniProtKB-UniRule"/>
</dbReference>
<dbReference type="GO" id="GO:0019677">
    <property type="term" value="P:NAD catabolic process"/>
    <property type="evidence" value="ECO:0007669"/>
    <property type="project" value="TreeGrafter"/>
</dbReference>
<dbReference type="GO" id="GO:0006734">
    <property type="term" value="P:NADH metabolic process"/>
    <property type="evidence" value="ECO:0007669"/>
    <property type="project" value="TreeGrafter"/>
</dbReference>
<dbReference type="GO" id="GO:0006742">
    <property type="term" value="P:NADP catabolic process"/>
    <property type="evidence" value="ECO:0007669"/>
    <property type="project" value="TreeGrafter"/>
</dbReference>
<dbReference type="CDD" id="cd03429">
    <property type="entry name" value="NUDIX_NADH_pyrophosphatase_Nudt13"/>
    <property type="match status" value="1"/>
</dbReference>
<dbReference type="FunFam" id="3.90.79.10:FF:000004">
    <property type="entry name" value="NADH pyrophosphatase"/>
    <property type="match status" value="1"/>
</dbReference>
<dbReference type="FunFam" id="3.90.79.20:FF:000001">
    <property type="entry name" value="NADH pyrophosphatase"/>
    <property type="match status" value="1"/>
</dbReference>
<dbReference type="Gene3D" id="3.90.79.20">
    <property type="match status" value="1"/>
</dbReference>
<dbReference type="Gene3D" id="3.90.79.10">
    <property type="entry name" value="Nucleoside Triphosphate Pyrophosphohydrolase"/>
    <property type="match status" value="1"/>
</dbReference>
<dbReference type="HAMAP" id="MF_00297">
    <property type="entry name" value="Nudix_NudC"/>
    <property type="match status" value="1"/>
</dbReference>
<dbReference type="InterPro" id="IPR050241">
    <property type="entry name" value="NAD-cap_RNA_hydrolase_NudC"/>
</dbReference>
<dbReference type="InterPro" id="IPR049734">
    <property type="entry name" value="NudC-like_C"/>
</dbReference>
<dbReference type="InterPro" id="IPR015797">
    <property type="entry name" value="NUDIX_hydrolase-like_dom_sf"/>
</dbReference>
<dbReference type="InterPro" id="IPR020084">
    <property type="entry name" value="NUDIX_hydrolase_CS"/>
</dbReference>
<dbReference type="InterPro" id="IPR000086">
    <property type="entry name" value="NUDIX_hydrolase_dom"/>
</dbReference>
<dbReference type="InterPro" id="IPR022925">
    <property type="entry name" value="RNA_Hydrolase_NudC"/>
</dbReference>
<dbReference type="InterPro" id="IPR015376">
    <property type="entry name" value="Znr_NADH_PPase"/>
</dbReference>
<dbReference type="NCBIfam" id="NF001299">
    <property type="entry name" value="PRK00241.1"/>
    <property type="match status" value="1"/>
</dbReference>
<dbReference type="PANTHER" id="PTHR42904:SF6">
    <property type="entry name" value="NAD-CAPPED RNA HYDROLASE NUDT12"/>
    <property type="match status" value="1"/>
</dbReference>
<dbReference type="PANTHER" id="PTHR42904">
    <property type="entry name" value="NUDIX HYDROLASE, NUDC SUBFAMILY"/>
    <property type="match status" value="1"/>
</dbReference>
<dbReference type="Pfam" id="PF00293">
    <property type="entry name" value="NUDIX"/>
    <property type="match status" value="1"/>
</dbReference>
<dbReference type="Pfam" id="PF09297">
    <property type="entry name" value="Zn_ribbon_NUD"/>
    <property type="match status" value="1"/>
</dbReference>
<dbReference type="SUPFAM" id="SSF55811">
    <property type="entry name" value="Nudix"/>
    <property type="match status" value="2"/>
</dbReference>
<dbReference type="PROSITE" id="PS51462">
    <property type="entry name" value="NUDIX"/>
    <property type="match status" value="1"/>
</dbReference>
<dbReference type="PROSITE" id="PS00893">
    <property type="entry name" value="NUDIX_BOX"/>
    <property type="match status" value="1"/>
</dbReference>
<reference key="1">
    <citation type="submission" date="2007-11" db="EMBL/GenBank/DDBJ databases">
        <authorList>
            <consortium name="The Salmonella enterica serovar Paratyphi B Genome Sequencing Project"/>
            <person name="McClelland M."/>
            <person name="Sanderson E.K."/>
            <person name="Porwollik S."/>
            <person name="Spieth J."/>
            <person name="Clifton W.S."/>
            <person name="Fulton R."/>
            <person name="Cordes M."/>
            <person name="Wollam A."/>
            <person name="Shah N."/>
            <person name="Pepin K."/>
            <person name="Bhonagiri V."/>
            <person name="Nash W."/>
            <person name="Johnson M."/>
            <person name="Thiruvilangam P."/>
            <person name="Wilson R."/>
        </authorList>
    </citation>
    <scope>NUCLEOTIDE SEQUENCE [LARGE SCALE GENOMIC DNA]</scope>
    <source>
        <strain>ATCC BAA-1250 / SPB7</strain>
    </source>
</reference>
<keyword id="KW-0378">Hydrolase</keyword>
<keyword id="KW-0460">Magnesium</keyword>
<keyword id="KW-0464">Manganese</keyword>
<keyword id="KW-0479">Metal-binding</keyword>
<keyword id="KW-0520">NAD</keyword>
<keyword id="KW-0862">Zinc</keyword>
<gene>
    <name evidence="1" type="primary">nudC</name>
    <name type="ordered locus">SPAB_05156</name>
</gene>
<sequence length="257" mass="29607">MDRIIEKLESGWWIVSHEQKLWLPYGELPHGLAANFDLVGQRALRIGEWQGEPVWLVLQHRRHDMGSVRQVIDQDAGLFQLAGRGVQLAEFYRSHKFCGYCGHPMHPSKTEWAMLCSHCRERYYPQIAPCIIVAIRREDSILLAQHVRHRNGVHTVLAGFVEVGETLEQAVAREVMEESGIKVKNLRYVTSQPWPFPQSLMTAFMAEYDSGEIVIDPKELLEANWYRYDDLPLLPPPGTVARRLIEDTVAMCRAEYD</sequence>
<evidence type="ECO:0000255" key="1">
    <source>
        <dbReference type="HAMAP-Rule" id="MF_00297"/>
    </source>
</evidence>